<feature type="chain" id="PRO_0000138039" description="Glycerol-3-phosphate dehydrogenase [NAD(P)+]">
    <location>
        <begin position="1"/>
        <end position="338"/>
    </location>
</feature>
<feature type="active site" description="Proton acceptor" evidence="1">
    <location>
        <position position="194"/>
    </location>
</feature>
<feature type="binding site" evidence="1">
    <location>
        <position position="13"/>
    </location>
    <ligand>
        <name>NADPH</name>
        <dbReference type="ChEBI" id="CHEBI:57783"/>
    </ligand>
</feature>
<feature type="binding site" evidence="1">
    <location>
        <position position="14"/>
    </location>
    <ligand>
        <name>NADPH</name>
        <dbReference type="ChEBI" id="CHEBI:57783"/>
    </ligand>
</feature>
<feature type="binding site" evidence="1">
    <location>
        <position position="108"/>
    </location>
    <ligand>
        <name>NADPH</name>
        <dbReference type="ChEBI" id="CHEBI:57783"/>
    </ligand>
</feature>
<feature type="binding site" evidence="1">
    <location>
        <position position="108"/>
    </location>
    <ligand>
        <name>sn-glycerol 3-phosphate</name>
        <dbReference type="ChEBI" id="CHEBI:57597"/>
    </ligand>
</feature>
<feature type="binding site" evidence="1">
    <location>
        <position position="139"/>
    </location>
    <ligand>
        <name>sn-glycerol 3-phosphate</name>
        <dbReference type="ChEBI" id="CHEBI:57597"/>
    </ligand>
</feature>
<feature type="binding site" evidence="1">
    <location>
        <position position="141"/>
    </location>
    <ligand>
        <name>sn-glycerol 3-phosphate</name>
        <dbReference type="ChEBI" id="CHEBI:57597"/>
    </ligand>
</feature>
<feature type="binding site" evidence="1">
    <location>
        <position position="143"/>
    </location>
    <ligand>
        <name>NADPH</name>
        <dbReference type="ChEBI" id="CHEBI:57783"/>
    </ligand>
</feature>
<feature type="binding site" evidence="1">
    <location>
        <position position="194"/>
    </location>
    <ligand>
        <name>sn-glycerol 3-phosphate</name>
        <dbReference type="ChEBI" id="CHEBI:57597"/>
    </ligand>
</feature>
<feature type="binding site" evidence="1">
    <location>
        <position position="247"/>
    </location>
    <ligand>
        <name>sn-glycerol 3-phosphate</name>
        <dbReference type="ChEBI" id="CHEBI:57597"/>
    </ligand>
</feature>
<feature type="binding site" evidence="1">
    <location>
        <position position="257"/>
    </location>
    <ligand>
        <name>sn-glycerol 3-phosphate</name>
        <dbReference type="ChEBI" id="CHEBI:57597"/>
    </ligand>
</feature>
<feature type="binding site" evidence="1">
    <location>
        <position position="258"/>
    </location>
    <ligand>
        <name>NADPH</name>
        <dbReference type="ChEBI" id="CHEBI:57783"/>
    </ligand>
</feature>
<feature type="binding site" evidence="1">
    <location>
        <position position="258"/>
    </location>
    <ligand>
        <name>sn-glycerol 3-phosphate</name>
        <dbReference type="ChEBI" id="CHEBI:57597"/>
    </ligand>
</feature>
<feature type="binding site" evidence="1">
    <location>
        <position position="259"/>
    </location>
    <ligand>
        <name>sn-glycerol 3-phosphate</name>
        <dbReference type="ChEBI" id="CHEBI:57597"/>
    </ligand>
</feature>
<feature type="binding site" evidence="1">
    <location>
        <position position="282"/>
    </location>
    <ligand>
        <name>NADPH</name>
        <dbReference type="ChEBI" id="CHEBI:57783"/>
    </ligand>
</feature>
<feature type="binding site" evidence="1">
    <location>
        <position position="284"/>
    </location>
    <ligand>
        <name>NADPH</name>
        <dbReference type="ChEBI" id="CHEBI:57783"/>
    </ligand>
</feature>
<proteinExistence type="inferred from homology"/>
<gene>
    <name evidence="1" type="primary">gpsA</name>
    <name type="ordered locus">spr1902</name>
</gene>
<protein>
    <recommendedName>
        <fullName evidence="1">Glycerol-3-phosphate dehydrogenase [NAD(P)+]</fullName>
        <ecNumber evidence="1">1.1.1.94</ecNumber>
    </recommendedName>
    <alternativeName>
        <fullName evidence="1">NAD(P)(+)-dependent glycerol-3-phosphate dehydrogenase</fullName>
    </alternativeName>
    <alternativeName>
        <fullName evidence="1">NAD(P)H-dependent dihydroxyacetone-phosphate reductase</fullName>
    </alternativeName>
</protein>
<sequence>MEKQTVAVLGPGSWGTALSQVLNDNGHEVRIWGNLPEQINEINTHHTNKHYFKDVVLDENIIAYTDLAETLKNVDAILFVVPTKVTRLVAQQVAQTLDHKVIIMHASKGLEPDSHKRLSTILEEEIPEHLRSDIVVVSGPSHAEETIVRDLTLITAASKDLQTAQYVQELFSNHYFRLYTNTDVIGVETAGALKNIIAVGAGALHGLGFGDNAKAAIIARGLAEITRLGVALGASPLTYSGLSGVGDLIVTGTSIHSRNWRAGDALGRGESLADIEANMGMVIEGISTTRAAYELAQELGVYMPITQAIYQVIYHGTNIKDAIYDIMNNEFKAENEWS</sequence>
<name>GPDA_STRR6</name>
<dbReference type="EC" id="1.1.1.94" evidence="1"/>
<dbReference type="EMBL" id="AE007317">
    <property type="protein sequence ID" value="AAL00704.1"/>
    <property type="molecule type" value="Genomic_DNA"/>
</dbReference>
<dbReference type="PIR" id="C98109">
    <property type="entry name" value="C98109"/>
</dbReference>
<dbReference type="RefSeq" id="NP_359493.1">
    <property type="nucleotide sequence ID" value="NC_003098.1"/>
</dbReference>
<dbReference type="RefSeq" id="WP_000415108.1">
    <property type="nucleotide sequence ID" value="NC_003098.1"/>
</dbReference>
<dbReference type="SMR" id="Q8DN59"/>
<dbReference type="STRING" id="171101.spr1902"/>
<dbReference type="KEGG" id="spr:spr1902"/>
<dbReference type="PATRIC" id="fig|171101.6.peg.2051"/>
<dbReference type="eggNOG" id="COG0240">
    <property type="taxonomic scope" value="Bacteria"/>
</dbReference>
<dbReference type="HOGENOM" id="CLU_033449_0_2_9"/>
<dbReference type="UniPathway" id="UPA00940"/>
<dbReference type="Proteomes" id="UP000000586">
    <property type="component" value="Chromosome"/>
</dbReference>
<dbReference type="GO" id="GO:0005829">
    <property type="term" value="C:cytosol"/>
    <property type="evidence" value="ECO:0000318"/>
    <property type="project" value="GO_Central"/>
</dbReference>
<dbReference type="GO" id="GO:0047952">
    <property type="term" value="F:glycerol-3-phosphate dehydrogenase [NAD(P)+] activity"/>
    <property type="evidence" value="ECO:0000318"/>
    <property type="project" value="GO_Central"/>
</dbReference>
<dbReference type="GO" id="GO:0051287">
    <property type="term" value="F:NAD binding"/>
    <property type="evidence" value="ECO:0007669"/>
    <property type="project" value="InterPro"/>
</dbReference>
<dbReference type="GO" id="GO:0005975">
    <property type="term" value="P:carbohydrate metabolic process"/>
    <property type="evidence" value="ECO:0007669"/>
    <property type="project" value="InterPro"/>
</dbReference>
<dbReference type="GO" id="GO:0046167">
    <property type="term" value="P:glycerol-3-phosphate biosynthetic process"/>
    <property type="evidence" value="ECO:0007669"/>
    <property type="project" value="UniProtKB-UniRule"/>
</dbReference>
<dbReference type="GO" id="GO:0046168">
    <property type="term" value="P:glycerol-3-phosphate catabolic process"/>
    <property type="evidence" value="ECO:0007669"/>
    <property type="project" value="InterPro"/>
</dbReference>
<dbReference type="GO" id="GO:0006072">
    <property type="term" value="P:glycerol-3-phosphate metabolic process"/>
    <property type="evidence" value="ECO:0000318"/>
    <property type="project" value="GO_Central"/>
</dbReference>
<dbReference type="GO" id="GO:0006650">
    <property type="term" value="P:glycerophospholipid metabolic process"/>
    <property type="evidence" value="ECO:0007669"/>
    <property type="project" value="UniProtKB-UniRule"/>
</dbReference>
<dbReference type="GO" id="GO:0008654">
    <property type="term" value="P:phospholipid biosynthetic process"/>
    <property type="evidence" value="ECO:0007669"/>
    <property type="project" value="UniProtKB-KW"/>
</dbReference>
<dbReference type="FunFam" id="1.10.1040.10:FF:000001">
    <property type="entry name" value="Glycerol-3-phosphate dehydrogenase [NAD(P)+]"/>
    <property type="match status" value="1"/>
</dbReference>
<dbReference type="FunFam" id="3.40.50.720:FF:000019">
    <property type="entry name" value="Glycerol-3-phosphate dehydrogenase [NAD(P)+]"/>
    <property type="match status" value="1"/>
</dbReference>
<dbReference type="Gene3D" id="1.10.1040.10">
    <property type="entry name" value="N-(1-d-carboxylethyl)-l-norvaline Dehydrogenase, domain 2"/>
    <property type="match status" value="1"/>
</dbReference>
<dbReference type="Gene3D" id="3.40.50.720">
    <property type="entry name" value="NAD(P)-binding Rossmann-like Domain"/>
    <property type="match status" value="1"/>
</dbReference>
<dbReference type="HAMAP" id="MF_00394">
    <property type="entry name" value="NAD_Glyc3P_dehydrog"/>
    <property type="match status" value="1"/>
</dbReference>
<dbReference type="InterPro" id="IPR008927">
    <property type="entry name" value="6-PGluconate_DH-like_C_sf"/>
</dbReference>
<dbReference type="InterPro" id="IPR013328">
    <property type="entry name" value="6PGD_dom2"/>
</dbReference>
<dbReference type="InterPro" id="IPR006168">
    <property type="entry name" value="G3P_DH_NAD-dep"/>
</dbReference>
<dbReference type="InterPro" id="IPR006109">
    <property type="entry name" value="G3P_DH_NAD-dep_C"/>
</dbReference>
<dbReference type="InterPro" id="IPR011128">
    <property type="entry name" value="G3P_DH_NAD-dep_N"/>
</dbReference>
<dbReference type="InterPro" id="IPR036291">
    <property type="entry name" value="NAD(P)-bd_dom_sf"/>
</dbReference>
<dbReference type="NCBIfam" id="NF000940">
    <property type="entry name" value="PRK00094.1-2"/>
    <property type="match status" value="1"/>
</dbReference>
<dbReference type="NCBIfam" id="NF000941">
    <property type="entry name" value="PRK00094.1-3"/>
    <property type="match status" value="1"/>
</dbReference>
<dbReference type="NCBIfam" id="NF000942">
    <property type="entry name" value="PRK00094.1-4"/>
    <property type="match status" value="1"/>
</dbReference>
<dbReference type="PANTHER" id="PTHR11728">
    <property type="entry name" value="GLYCEROL-3-PHOSPHATE DEHYDROGENASE"/>
    <property type="match status" value="1"/>
</dbReference>
<dbReference type="PANTHER" id="PTHR11728:SF1">
    <property type="entry name" value="GLYCEROL-3-PHOSPHATE DEHYDROGENASE [NAD(+)] 2, CHLOROPLASTIC"/>
    <property type="match status" value="1"/>
</dbReference>
<dbReference type="Pfam" id="PF07479">
    <property type="entry name" value="NAD_Gly3P_dh_C"/>
    <property type="match status" value="1"/>
</dbReference>
<dbReference type="Pfam" id="PF01210">
    <property type="entry name" value="NAD_Gly3P_dh_N"/>
    <property type="match status" value="1"/>
</dbReference>
<dbReference type="PIRSF" id="PIRSF000114">
    <property type="entry name" value="Glycerol-3-P_dh"/>
    <property type="match status" value="1"/>
</dbReference>
<dbReference type="PRINTS" id="PR00077">
    <property type="entry name" value="GPDHDRGNASE"/>
</dbReference>
<dbReference type="SUPFAM" id="SSF48179">
    <property type="entry name" value="6-phosphogluconate dehydrogenase C-terminal domain-like"/>
    <property type="match status" value="1"/>
</dbReference>
<dbReference type="SUPFAM" id="SSF51735">
    <property type="entry name" value="NAD(P)-binding Rossmann-fold domains"/>
    <property type="match status" value="1"/>
</dbReference>
<dbReference type="PROSITE" id="PS00957">
    <property type="entry name" value="NAD_G3PDH"/>
    <property type="match status" value="1"/>
</dbReference>
<reference key="1">
    <citation type="journal article" date="2001" name="J. Bacteriol.">
        <title>Genome of the bacterium Streptococcus pneumoniae strain R6.</title>
        <authorList>
            <person name="Hoskins J."/>
            <person name="Alborn W.E. Jr."/>
            <person name="Arnold J."/>
            <person name="Blaszczak L.C."/>
            <person name="Burgett S."/>
            <person name="DeHoff B.S."/>
            <person name="Estrem S.T."/>
            <person name="Fritz L."/>
            <person name="Fu D.-J."/>
            <person name="Fuller W."/>
            <person name="Geringer C."/>
            <person name="Gilmour R."/>
            <person name="Glass J.S."/>
            <person name="Khoja H."/>
            <person name="Kraft A.R."/>
            <person name="Lagace R.E."/>
            <person name="LeBlanc D.J."/>
            <person name="Lee L.N."/>
            <person name="Lefkowitz E.J."/>
            <person name="Lu J."/>
            <person name="Matsushima P."/>
            <person name="McAhren S.M."/>
            <person name="McHenney M."/>
            <person name="McLeaster K."/>
            <person name="Mundy C.W."/>
            <person name="Nicas T.I."/>
            <person name="Norris F.H."/>
            <person name="O'Gara M."/>
            <person name="Peery R.B."/>
            <person name="Robertson G.T."/>
            <person name="Rockey P."/>
            <person name="Sun P.-M."/>
            <person name="Winkler M.E."/>
            <person name="Yang Y."/>
            <person name="Young-Bellido M."/>
            <person name="Zhao G."/>
            <person name="Zook C.A."/>
            <person name="Baltz R.H."/>
            <person name="Jaskunas S.R."/>
            <person name="Rosteck P.R. Jr."/>
            <person name="Skatrud P.L."/>
            <person name="Glass J.I."/>
        </authorList>
    </citation>
    <scope>NUCLEOTIDE SEQUENCE [LARGE SCALE GENOMIC DNA]</scope>
    <source>
        <strain>ATCC BAA-255 / R6</strain>
    </source>
</reference>
<organism>
    <name type="scientific">Streptococcus pneumoniae (strain ATCC BAA-255 / R6)</name>
    <dbReference type="NCBI Taxonomy" id="171101"/>
    <lineage>
        <taxon>Bacteria</taxon>
        <taxon>Bacillati</taxon>
        <taxon>Bacillota</taxon>
        <taxon>Bacilli</taxon>
        <taxon>Lactobacillales</taxon>
        <taxon>Streptococcaceae</taxon>
        <taxon>Streptococcus</taxon>
    </lineage>
</organism>
<comment type="function">
    <text evidence="1">Catalyzes the reduction of the glycolytic intermediate dihydroxyacetone phosphate (DHAP) to sn-glycerol 3-phosphate (G3P), the key precursor for phospholipid synthesis.</text>
</comment>
<comment type="catalytic activity">
    <reaction evidence="1">
        <text>sn-glycerol 3-phosphate + NAD(+) = dihydroxyacetone phosphate + NADH + H(+)</text>
        <dbReference type="Rhea" id="RHEA:11092"/>
        <dbReference type="ChEBI" id="CHEBI:15378"/>
        <dbReference type="ChEBI" id="CHEBI:57540"/>
        <dbReference type="ChEBI" id="CHEBI:57597"/>
        <dbReference type="ChEBI" id="CHEBI:57642"/>
        <dbReference type="ChEBI" id="CHEBI:57945"/>
        <dbReference type="EC" id="1.1.1.94"/>
    </reaction>
    <physiologicalReaction direction="right-to-left" evidence="1">
        <dbReference type="Rhea" id="RHEA:11094"/>
    </physiologicalReaction>
</comment>
<comment type="catalytic activity">
    <reaction evidence="1">
        <text>sn-glycerol 3-phosphate + NADP(+) = dihydroxyacetone phosphate + NADPH + H(+)</text>
        <dbReference type="Rhea" id="RHEA:11096"/>
        <dbReference type="ChEBI" id="CHEBI:15378"/>
        <dbReference type="ChEBI" id="CHEBI:57597"/>
        <dbReference type="ChEBI" id="CHEBI:57642"/>
        <dbReference type="ChEBI" id="CHEBI:57783"/>
        <dbReference type="ChEBI" id="CHEBI:58349"/>
        <dbReference type="EC" id="1.1.1.94"/>
    </reaction>
    <physiologicalReaction direction="right-to-left" evidence="1">
        <dbReference type="Rhea" id="RHEA:11098"/>
    </physiologicalReaction>
</comment>
<comment type="pathway">
    <text evidence="1">Membrane lipid metabolism; glycerophospholipid metabolism.</text>
</comment>
<comment type="subcellular location">
    <subcellularLocation>
        <location evidence="1">Cytoplasm</location>
    </subcellularLocation>
</comment>
<comment type="similarity">
    <text evidence="1">Belongs to the NAD-dependent glycerol-3-phosphate dehydrogenase family.</text>
</comment>
<evidence type="ECO:0000255" key="1">
    <source>
        <dbReference type="HAMAP-Rule" id="MF_00394"/>
    </source>
</evidence>
<accession>Q8DN59</accession>
<keyword id="KW-0963">Cytoplasm</keyword>
<keyword id="KW-0444">Lipid biosynthesis</keyword>
<keyword id="KW-0443">Lipid metabolism</keyword>
<keyword id="KW-0520">NAD</keyword>
<keyword id="KW-0521">NADP</keyword>
<keyword id="KW-0547">Nucleotide-binding</keyword>
<keyword id="KW-0560">Oxidoreductase</keyword>
<keyword id="KW-0594">Phospholipid biosynthesis</keyword>
<keyword id="KW-1208">Phospholipid metabolism</keyword>
<keyword id="KW-1185">Reference proteome</keyword>